<dbReference type="EMBL" id="Z36092">
    <property type="protein sequence ID" value="CAA85188.1"/>
    <property type="molecule type" value="Genomic_DNA"/>
</dbReference>
<dbReference type="EMBL" id="BK006936">
    <property type="protein sequence ID" value="DAA07341.1"/>
    <property type="molecule type" value="Genomic_DNA"/>
</dbReference>
<dbReference type="PIR" id="S46101">
    <property type="entry name" value="S46101"/>
</dbReference>
<dbReference type="RefSeq" id="NP_009784.1">
    <property type="nucleotide sequence ID" value="NM_001178573.1"/>
</dbReference>
<dbReference type="BioGRID" id="32921">
    <property type="interactions" value="102"/>
</dbReference>
<dbReference type="DIP" id="DIP-6382N"/>
<dbReference type="FunCoup" id="P38321">
    <property type="interactions" value="290"/>
</dbReference>
<dbReference type="IntAct" id="P38321">
    <property type="interactions" value="17"/>
</dbReference>
<dbReference type="MINT" id="P38321"/>
<dbReference type="STRING" id="4932.YBR225W"/>
<dbReference type="GlyGen" id="P38321">
    <property type="glycosylation" value="1 site, 1 O-linked glycan (1 site)"/>
</dbReference>
<dbReference type="iPTMnet" id="P38321"/>
<dbReference type="PaxDb" id="4932-YBR225W"/>
<dbReference type="PeptideAtlas" id="P38321"/>
<dbReference type="EnsemblFungi" id="YBR225W_mRNA">
    <property type="protein sequence ID" value="YBR225W"/>
    <property type="gene ID" value="YBR225W"/>
</dbReference>
<dbReference type="GeneID" id="852526"/>
<dbReference type="KEGG" id="sce:YBR225W"/>
<dbReference type="AGR" id="SGD:S000000429"/>
<dbReference type="SGD" id="S000000429">
    <property type="gene designation" value="YBR225W"/>
</dbReference>
<dbReference type="VEuPathDB" id="FungiDB:YBR225W"/>
<dbReference type="eggNOG" id="ENOG502QRP4">
    <property type="taxonomic scope" value="Eukaryota"/>
</dbReference>
<dbReference type="HOGENOM" id="CLU_011913_0_0_1"/>
<dbReference type="InParanoid" id="P38321"/>
<dbReference type="OMA" id="HIHPTKH"/>
<dbReference type="OrthoDB" id="10256176at2759"/>
<dbReference type="BioCyc" id="YEAST:G3O-29159-MONOMER"/>
<dbReference type="BioGRID-ORCS" id="852526">
    <property type="hits" value="1 hit in 10 CRISPR screens"/>
</dbReference>
<dbReference type="PRO" id="PR:P38321"/>
<dbReference type="Proteomes" id="UP000002311">
    <property type="component" value="Chromosome II"/>
</dbReference>
<dbReference type="RNAct" id="P38321">
    <property type="molecule type" value="protein"/>
</dbReference>
<dbReference type="Gene3D" id="3.40.50.150">
    <property type="entry name" value="Vaccinia Virus protein VP39"/>
    <property type="match status" value="1"/>
</dbReference>
<dbReference type="InterPro" id="IPR029063">
    <property type="entry name" value="SAM-dependent_MTases_sf"/>
</dbReference>
<dbReference type="SUPFAM" id="SSF53335">
    <property type="entry name" value="S-adenosyl-L-methionine-dependent methyltransferases"/>
    <property type="match status" value="1"/>
</dbReference>
<feature type="chain" id="PRO_0000202515" description="Uncharacterized protein YBR225W">
    <location>
        <begin position="1"/>
        <end position="900"/>
    </location>
</feature>
<feature type="region of interest" description="Disordered" evidence="1">
    <location>
        <begin position="1"/>
        <end position="84"/>
    </location>
</feature>
<feature type="region of interest" description="Disordered" evidence="1">
    <location>
        <begin position="103"/>
        <end position="160"/>
    </location>
</feature>
<feature type="region of interest" description="Disordered" evidence="1">
    <location>
        <begin position="512"/>
        <end position="556"/>
    </location>
</feature>
<feature type="region of interest" description="Disordered" evidence="1">
    <location>
        <begin position="568"/>
        <end position="613"/>
    </location>
</feature>
<feature type="region of interest" description="Disordered" evidence="1">
    <location>
        <begin position="648"/>
        <end position="676"/>
    </location>
</feature>
<feature type="compositionally biased region" description="Basic and acidic residues" evidence="1">
    <location>
        <begin position="1"/>
        <end position="16"/>
    </location>
</feature>
<feature type="compositionally biased region" description="Polar residues" evidence="1">
    <location>
        <begin position="17"/>
        <end position="27"/>
    </location>
</feature>
<feature type="compositionally biased region" description="Basic and acidic residues" evidence="1">
    <location>
        <begin position="30"/>
        <end position="58"/>
    </location>
</feature>
<feature type="compositionally biased region" description="Low complexity" evidence="1">
    <location>
        <begin position="63"/>
        <end position="76"/>
    </location>
</feature>
<feature type="compositionally biased region" description="Low complexity" evidence="1">
    <location>
        <begin position="103"/>
        <end position="127"/>
    </location>
</feature>
<feature type="compositionally biased region" description="Basic residues" evidence="1">
    <location>
        <begin position="129"/>
        <end position="143"/>
    </location>
</feature>
<feature type="compositionally biased region" description="Low complexity" evidence="1">
    <location>
        <begin position="528"/>
        <end position="537"/>
    </location>
</feature>
<feature type="compositionally biased region" description="Basic residues" evidence="1">
    <location>
        <begin position="543"/>
        <end position="553"/>
    </location>
</feature>
<feature type="compositionally biased region" description="Low complexity" evidence="1">
    <location>
        <begin position="570"/>
        <end position="601"/>
    </location>
</feature>
<feature type="compositionally biased region" description="Low complexity" evidence="1">
    <location>
        <begin position="665"/>
        <end position="676"/>
    </location>
</feature>
<feature type="modified residue" description="Phosphoserine" evidence="3">
    <location>
        <position position="105"/>
    </location>
</feature>
<protein>
    <recommendedName>
        <fullName>Uncharacterized protein YBR225W</fullName>
    </recommendedName>
</protein>
<name>YB75_YEAST</name>
<comment type="miscellaneous">
    <text evidence="2">Present with 623 molecules/cell in log phase SD medium.</text>
</comment>
<sequence length="900" mass="101236">MGSNKEAKNIDSKNDRGLTSITSNKISNLKAHDNHTSSMITEHKNADKEKGKQEKESRNGTTQSSSSVESHSPQVSHHSDKLSSFDSPLHLPNFRLADDLFSNSSRRSSDSAASSSVSKLKSAQLSKIGLHHHHTSNNKHSHRSGTPTSEVKANYSPDPSAPRFIVSNMVGNGRGGGGLHGATSNVVKKLHSRKKWDWNTLPASDSSLLIKTVSGNHNLINICIDGEFKQIMYDPNHNELFNRMDLFLSFNMDSSPEDSLIFAKKRLRSYIDFLTKYLESRKYAFECYPFNIENIINIETEVKCFPSFDPLKDYSEIESLIQLWLAQSQKFLLQSNSFFFSSEVVEELIKRKPTTRQHSNPTISTTSNKISDPTLYIQQLDIEANSPRPVISDPLDEIDILLIRPLHKTLGGWQLAYDEPSLNIADFALDLSPWMIDSSDNDAQNKNASEIAPEYLTNLQNYLPRKGSRAKIVSDEQEVIELNSSNASEYMYDCMNRKFFTDDAKERISRNNFNQGVEEDPLNDQFASSRSLSLPSSGADAVKRKKSPTKATKKSGFVNFFKRKHSQLASTSHTTSPSVSPSISSSSSPKIQPQSHISSPPRTEKAPHVKSANQAHQNEWLENFFCRTLNNYKEIDLPTQFILPKEVKRSSNAQLQPEDEPPLSSPISSNSDNSFPNEGLDRAKSAAIYGKEYLKLRLPFASDTIPAVICPWVWTSLSYYKWKALLREIYRSIIPGGYALAIVPDLRISNTYYTGILGNADAEKANNSSEEFLTTKERDKTFDAMAIDAINKGLHIHPTKHLTRTFKDVGFTGIKSSVLSLKTGDFKTDMGFLNEFNSLDMWDYMLRRQLPDSSCPPKDTDPTTLFKRYVEEHIGKIDDNAGCFRTLYVVAQKPKLPYTK</sequence>
<organism>
    <name type="scientific">Saccharomyces cerevisiae (strain ATCC 204508 / S288c)</name>
    <name type="common">Baker's yeast</name>
    <dbReference type="NCBI Taxonomy" id="559292"/>
    <lineage>
        <taxon>Eukaryota</taxon>
        <taxon>Fungi</taxon>
        <taxon>Dikarya</taxon>
        <taxon>Ascomycota</taxon>
        <taxon>Saccharomycotina</taxon>
        <taxon>Saccharomycetes</taxon>
        <taxon>Saccharomycetales</taxon>
        <taxon>Saccharomycetaceae</taxon>
        <taxon>Saccharomyces</taxon>
    </lineage>
</organism>
<keyword id="KW-0597">Phosphoprotein</keyword>
<keyword id="KW-1185">Reference proteome</keyword>
<evidence type="ECO:0000256" key="1">
    <source>
        <dbReference type="SAM" id="MobiDB-lite"/>
    </source>
</evidence>
<evidence type="ECO:0000269" key="2">
    <source>
    </source>
</evidence>
<evidence type="ECO:0007744" key="3">
    <source>
    </source>
</evidence>
<reference key="1">
    <citation type="journal article" date="1994" name="EMBO J.">
        <title>Complete DNA sequence of yeast chromosome II.</title>
        <authorList>
            <person name="Feldmann H."/>
            <person name="Aigle M."/>
            <person name="Aljinovic G."/>
            <person name="Andre B."/>
            <person name="Baclet M.C."/>
            <person name="Barthe C."/>
            <person name="Baur A."/>
            <person name="Becam A.-M."/>
            <person name="Biteau N."/>
            <person name="Boles E."/>
            <person name="Brandt T."/>
            <person name="Brendel M."/>
            <person name="Brueckner M."/>
            <person name="Bussereau F."/>
            <person name="Christiansen C."/>
            <person name="Contreras R."/>
            <person name="Crouzet M."/>
            <person name="Cziepluch C."/>
            <person name="Demolis N."/>
            <person name="Delaveau T."/>
            <person name="Doignon F."/>
            <person name="Domdey H."/>
            <person name="Duesterhus S."/>
            <person name="Dubois E."/>
            <person name="Dujon B."/>
            <person name="El Bakkoury M."/>
            <person name="Entian K.-D."/>
            <person name="Feuermann M."/>
            <person name="Fiers W."/>
            <person name="Fobo G.M."/>
            <person name="Fritz C."/>
            <person name="Gassenhuber J."/>
            <person name="Glansdorff N."/>
            <person name="Goffeau A."/>
            <person name="Grivell L.A."/>
            <person name="de Haan M."/>
            <person name="Hein C."/>
            <person name="Herbert C.J."/>
            <person name="Hollenberg C.P."/>
            <person name="Holmstroem K."/>
            <person name="Jacq C."/>
            <person name="Jacquet M."/>
            <person name="Jauniaux J.-C."/>
            <person name="Jonniaux J.-L."/>
            <person name="Kallesoee T."/>
            <person name="Kiesau P."/>
            <person name="Kirchrath L."/>
            <person name="Koetter P."/>
            <person name="Korol S."/>
            <person name="Liebl S."/>
            <person name="Logghe M."/>
            <person name="Lohan A.J.E."/>
            <person name="Louis E.J."/>
            <person name="Li Z.Y."/>
            <person name="Maat M.J."/>
            <person name="Mallet L."/>
            <person name="Mannhaupt G."/>
            <person name="Messenguy F."/>
            <person name="Miosga T."/>
            <person name="Molemans F."/>
            <person name="Mueller S."/>
            <person name="Nasr F."/>
            <person name="Obermaier B."/>
            <person name="Perea J."/>
            <person name="Pierard A."/>
            <person name="Piravandi E."/>
            <person name="Pohl F.M."/>
            <person name="Pohl T.M."/>
            <person name="Potier S."/>
            <person name="Proft M."/>
            <person name="Purnelle B."/>
            <person name="Ramezani Rad M."/>
            <person name="Rieger M."/>
            <person name="Rose M."/>
            <person name="Schaaff-Gerstenschlaeger I."/>
            <person name="Scherens B."/>
            <person name="Schwarzlose C."/>
            <person name="Skala J."/>
            <person name="Slonimski P.P."/>
            <person name="Smits P.H.M."/>
            <person name="Souciet J.-L."/>
            <person name="Steensma H.Y."/>
            <person name="Stucka R."/>
            <person name="Urrestarazu L.A."/>
            <person name="van der Aart Q.J.M."/>
            <person name="Van Dyck L."/>
            <person name="Vassarotti A."/>
            <person name="Vetter I."/>
            <person name="Vierendeels F."/>
            <person name="Vissers S."/>
            <person name="Wagner G."/>
            <person name="de Wergifosse P."/>
            <person name="Wolfe K.H."/>
            <person name="Zagulski M."/>
            <person name="Zimmermann F.K."/>
            <person name="Mewes H.-W."/>
            <person name="Kleine K."/>
        </authorList>
    </citation>
    <scope>NUCLEOTIDE SEQUENCE [LARGE SCALE GENOMIC DNA]</scope>
    <source>
        <strain>ATCC 204508 / S288c</strain>
    </source>
</reference>
<reference key="2">
    <citation type="journal article" date="2014" name="G3 (Bethesda)">
        <title>The reference genome sequence of Saccharomyces cerevisiae: Then and now.</title>
        <authorList>
            <person name="Engel S.R."/>
            <person name="Dietrich F.S."/>
            <person name="Fisk D.G."/>
            <person name="Binkley G."/>
            <person name="Balakrishnan R."/>
            <person name="Costanzo M.C."/>
            <person name="Dwight S.S."/>
            <person name="Hitz B.C."/>
            <person name="Karra K."/>
            <person name="Nash R.S."/>
            <person name="Weng S."/>
            <person name="Wong E.D."/>
            <person name="Lloyd P."/>
            <person name="Skrzypek M.S."/>
            <person name="Miyasato S.R."/>
            <person name="Simison M."/>
            <person name="Cherry J.M."/>
        </authorList>
    </citation>
    <scope>GENOME REANNOTATION</scope>
    <source>
        <strain>ATCC 204508 / S288c</strain>
    </source>
</reference>
<reference key="3">
    <citation type="journal article" date="2003" name="Nature">
        <title>Global analysis of protein expression in yeast.</title>
        <authorList>
            <person name="Ghaemmaghami S."/>
            <person name="Huh W.-K."/>
            <person name="Bower K."/>
            <person name="Howson R.W."/>
            <person name="Belle A."/>
            <person name="Dephoure N."/>
            <person name="O'Shea E.K."/>
            <person name="Weissman J.S."/>
        </authorList>
    </citation>
    <scope>LEVEL OF PROTEIN EXPRESSION [LARGE SCALE ANALYSIS]</scope>
</reference>
<reference key="4">
    <citation type="journal article" date="2007" name="Proc. Natl. Acad. Sci. U.S.A.">
        <title>Analysis of phosphorylation sites on proteins from Saccharomyces cerevisiae by electron transfer dissociation (ETD) mass spectrometry.</title>
        <authorList>
            <person name="Chi A."/>
            <person name="Huttenhower C."/>
            <person name="Geer L.Y."/>
            <person name="Coon J.J."/>
            <person name="Syka J.E.P."/>
            <person name="Bai D.L."/>
            <person name="Shabanowitz J."/>
            <person name="Burke D.J."/>
            <person name="Troyanskaya O.G."/>
            <person name="Hunt D.F."/>
        </authorList>
    </citation>
    <scope>IDENTIFICATION BY MASS SPECTROMETRY [LARGE SCALE ANALYSIS]</scope>
</reference>
<reference key="5">
    <citation type="journal article" date="2008" name="Mol. Cell. Proteomics">
        <title>A multidimensional chromatography technology for in-depth phosphoproteome analysis.</title>
        <authorList>
            <person name="Albuquerque C.P."/>
            <person name="Smolka M.B."/>
            <person name="Payne S.H."/>
            <person name="Bafna V."/>
            <person name="Eng J."/>
            <person name="Zhou H."/>
        </authorList>
    </citation>
    <scope>IDENTIFICATION BY MASS SPECTROMETRY [LARGE SCALE ANALYSIS]</scope>
</reference>
<reference key="6">
    <citation type="journal article" date="2009" name="Science">
        <title>Global analysis of Cdk1 substrate phosphorylation sites provides insights into evolution.</title>
        <authorList>
            <person name="Holt L.J."/>
            <person name="Tuch B.B."/>
            <person name="Villen J."/>
            <person name="Johnson A.D."/>
            <person name="Gygi S.P."/>
            <person name="Morgan D.O."/>
        </authorList>
    </citation>
    <scope>PHOSPHORYLATION [LARGE SCALE ANALYSIS] AT SER-105</scope>
    <scope>IDENTIFICATION BY MASS SPECTROMETRY [LARGE SCALE ANALYSIS]</scope>
</reference>
<proteinExistence type="evidence at protein level"/>
<accession>P38321</accession>
<accession>D6VQM1</accession>
<gene>
    <name type="ordered locus">YBR225W</name>
    <name type="ORF">YBR1522</name>
</gene>